<accession>P54221</accession>
<accession>Q5UYT9</accession>
<name>SYS_HALMA</name>
<gene>
    <name type="primary">serS</name>
    <name type="ordered locus">rrnAC2808</name>
</gene>
<sequence>MLSRQFVREHPETVRDAIERKGVTGVDLDEILDIDEEWRELKAEGDGLRQERNEVSSKIGELKQDGKDEEAQEAIDRSQELKDELQDIEERADELESQLEEALLELPNIPHESVPTGEGEADNVERYREGFDDLRDLPDEVVPHYDLGEDLDLLDFERGAKVSGGGYQFVKGEGARLEHALIQFMLDVHREQEYVDVLPPIPVNSDSMEGTGQLPKFAEDAYRVGARQDDDYDSDDLWLLPTAEVPVTNMYRGEILLDDDLPVKHQAFSPNFRREAGEHGTETRGYVRVHQFHKVELVNFVRPENSYDRLESLLDEAAEVLDRLELPYRVLDMCTGDMGFTQAKKYDIEVWAPGDDMEDGPDRGGRWLEVSSVSNFEDFQARRAGLRYRPERHESADYLHTLNGSGLAVPRVLVAIMEYYQNDDGTITVPEPLRPYMGGQEVIEGSEKIGESAVGAGEKE</sequence>
<evidence type="ECO:0000250" key="1"/>
<evidence type="ECO:0000256" key="2">
    <source>
        <dbReference type="SAM" id="MobiDB-lite"/>
    </source>
</evidence>
<evidence type="ECO:0000269" key="3">
    <source>
    </source>
</evidence>
<evidence type="ECO:0000305" key="4"/>
<comment type="function">
    <text evidence="3">Catalyzes the attachment of serine to tRNA(Ser). Is also probably able to aminoacylate tRNA(Sec) with serine, to form the misacylated tRNA L-seryl-tRNA(Sec), which will be further converted into selenocysteinyl-tRNA(Sec).</text>
</comment>
<comment type="catalytic activity">
    <reaction>
        <text>tRNA(Ser) + L-serine + ATP = L-seryl-tRNA(Ser) + AMP + diphosphate + H(+)</text>
        <dbReference type="Rhea" id="RHEA:12292"/>
        <dbReference type="Rhea" id="RHEA-COMP:9669"/>
        <dbReference type="Rhea" id="RHEA-COMP:9703"/>
        <dbReference type="ChEBI" id="CHEBI:15378"/>
        <dbReference type="ChEBI" id="CHEBI:30616"/>
        <dbReference type="ChEBI" id="CHEBI:33019"/>
        <dbReference type="ChEBI" id="CHEBI:33384"/>
        <dbReference type="ChEBI" id="CHEBI:78442"/>
        <dbReference type="ChEBI" id="CHEBI:78533"/>
        <dbReference type="ChEBI" id="CHEBI:456215"/>
        <dbReference type="EC" id="6.1.1.11"/>
    </reaction>
</comment>
<comment type="catalytic activity">
    <reaction>
        <text>tRNA(Sec) + L-serine + ATP = L-seryl-tRNA(Sec) + AMP + diphosphate + H(+)</text>
        <dbReference type="Rhea" id="RHEA:42580"/>
        <dbReference type="Rhea" id="RHEA-COMP:9742"/>
        <dbReference type="Rhea" id="RHEA-COMP:10128"/>
        <dbReference type="ChEBI" id="CHEBI:15378"/>
        <dbReference type="ChEBI" id="CHEBI:30616"/>
        <dbReference type="ChEBI" id="CHEBI:33019"/>
        <dbReference type="ChEBI" id="CHEBI:33384"/>
        <dbReference type="ChEBI" id="CHEBI:78442"/>
        <dbReference type="ChEBI" id="CHEBI:78533"/>
        <dbReference type="ChEBI" id="CHEBI:456215"/>
        <dbReference type="EC" id="6.1.1.11"/>
    </reaction>
</comment>
<comment type="pathway">
    <text>Aminoacyl-tRNA biosynthesis; selenocysteinyl-tRNA(Sec) biosynthesis; L-seryl-tRNA(Sec) from L-serine and tRNA(Sec): step 1/1.</text>
</comment>
<comment type="subunit">
    <text evidence="1">Homodimer. The tRNA molecule binds across the dimer (By similarity).</text>
</comment>
<comment type="subcellular location">
    <subcellularLocation>
        <location evidence="1">Cytoplasm</location>
    </subcellularLocation>
</comment>
<comment type="domain">
    <text evidence="1">Consists of two distinct domains, a catalytic core and a N-terminal extension that is involved in tRNA binding.</text>
</comment>
<comment type="similarity">
    <text evidence="4">Belongs to the class-II aminoacyl-tRNA synthetase family. Type-1 seryl-tRNA synthetase subfamily.</text>
</comment>
<proteinExistence type="evidence at protein level"/>
<protein>
    <recommendedName>
        <fullName>Serine--tRNA ligase</fullName>
        <ecNumber>6.1.1.11</ecNumber>
    </recommendedName>
    <alternativeName>
        <fullName>Seryl-tRNA synthetase</fullName>
        <shortName>SerRS</shortName>
    </alternativeName>
    <alternativeName>
        <fullName>Seryl-tRNA(Ser/Sec) synthetase</fullName>
    </alternativeName>
</protein>
<reference key="1">
    <citation type="journal article" date="1997" name="Eur. J. Biochem.">
        <title>Seryl-tRNA synthetase from the extreme halophile Haloarcula marismortui -- isolation, characterization and sequencing of the gene and its expression in Escherichia coli.</title>
        <authorList>
            <person name="Taupin C.M.J."/>
            <person name="Hartlein M."/>
            <person name="Leberman R."/>
        </authorList>
    </citation>
    <scope>NUCLEOTIDE SEQUENCE [GENOMIC DNA]</scope>
    <scope>PROTEIN SEQUENCE OF 1-9; 92-104; 162-171; 265-273; 289-294; 396-402 AND 449-459</scope>
    <scope>FUNCTION</scope>
</reference>
<reference key="2">
    <citation type="journal article" date="2004" name="Genome Res.">
        <title>Genome sequence of Haloarcula marismortui: a halophilic archaeon from the Dead Sea.</title>
        <authorList>
            <person name="Baliga N.S."/>
            <person name="Bonneau R."/>
            <person name="Facciotti M.T."/>
            <person name="Pan M."/>
            <person name="Glusman G."/>
            <person name="Deutsch E.W."/>
            <person name="Shannon P."/>
            <person name="Chiu Y."/>
            <person name="Weng R.S."/>
            <person name="Gan R.R."/>
            <person name="Hung P."/>
            <person name="Date S.V."/>
            <person name="Marcotte E."/>
            <person name="Hood L."/>
            <person name="Ng W.V."/>
        </authorList>
    </citation>
    <scope>NUCLEOTIDE SEQUENCE [LARGE SCALE GENOMIC DNA]</scope>
    <source>
        <strain>ATCC 43049 / DSM 3752 / JCM 8966 / VKM B-1809</strain>
    </source>
</reference>
<feature type="chain" id="PRO_0000122171" description="Serine--tRNA ligase">
    <location>
        <begin position="1"/>
        <end position="460"/>
    </location>
</feature>
<feature type="region of interest" description="Disordered" evidence="2">
    <location>
        <begin position="43"/>
        <end position="81"/>
    </location>
</feature>
<feature type="compositionally biased region" description="Basic and acidic residues" evidence="2">
    <location>
        <begin position="43"/>
        <end position="66"/>
    </location>
</feature>
<feature type="binding site" evidence="1">
    <location>
        <begin position="242"/>
        <end position="244"/>
    </location>
    <ligand>
        <name>L-serine</name>
        <dbReference type="ChEBI" id="CHEBI:33384"/>
    </ligand>
</feature>
<feature type="binding site" evidence="1">
    <location>
        <begin position="273"/>
        <end position="275"/>
    </location>
    <ligand>
        <name>ATP</name>
        <dbReference type="ChEBI" id="CHEBI:30616"/>
    </ligand>
</feature>
<feature type="binding site" evidence="1">
    <location>
        <position position="289"/>
    </location>
    <ligand>
        <name>ATP</name>
        <dbReference type="ChEBI" id="CHEBI:30616"/>
    </ligand>
</feature>
<feature type="binding site" evidence="1">
    <location>
        <position position="296"/>
    </location>
    <ligand>
        <name>L-serine</name>
        <dbReference type="ChEBI" id="CHEBI:33384"/>
    </ligand>
</feature>
<feature type="binding site" evidence="1">
    <location>
        <begin position="369"/>
        <end position="372"/>
    </location>
    <ligand>
        <name>ATP</name>
        <dbReference type="ChEBI" id="CHEBI:30616"/>
    </ligand>
</feature>
<feature type="binding site" evidence="1">
    <location>
        <position position="405"/>
    </location>
    <ligand>
        <name>L-serine</name>
        <dbReference type="ChEBI" id="CHEBI:33384"/>
    </ligand>
</feature>
<dbReference type="EC" id="6.1.1.11"/>
<dbReference type="EMBL" id="X91007">
    <property type="protein sequence ID" value="CAA62489.1"/>
    <property type="molecule type" value="Genomic_DNA"/>
</dbReference>
<dbReference type="EMBL" id="AY596297">
    <property type="protein sequence ID" value="AAV47564.1"/>
    <property type="molecule type" value="Genomic_DNA"/>
</dbReference>
<dbReference type="PIR" id="T47108">
    <property type="entry name" value="T47108"/>
</dbReference>
<dbReference type="RefSeq" id="WP_011224444.1">
    <property type="nucleotide sequence ID" value="NC_006396.1"/>
</dbReference>
<dbReference type="SMR" id="P54221"/>
<dbReference type="STRING" id="272569.rrnAC2808"/>
<dbReference type="PaxDb" id="272569-rrnAC2808"/>
<dbReference type="EnsemblBacteria" id="AAV47564">
    <property type="protein sequence ID" value="AAV47564"/>
    <property type="gene ID" value="rrnAC2808"/>
</dbReference>
<dbReference type="GeneID" id="40153661"/>
<dbReference type="KEGG" id="hma:rrnAC2808"/>
<dbReference type="PATRIC" id="fig|272569.17.peg.3382"/>
<dbReference type="eggNOG" id="arCOG00403">
    <property type="taxonomic scope" value="Archaea"/>
</dbReference>
<dbReference type="HOGENOM" id="CLU_023797_0_1_2"/>
<dbReference type="UniPathway" id="UPA00906">
    <property type="reaction ID" value="UER00895"/>
</dbReference>
<dbReference type="Proteomes" id="UP000001169">
    <property type="component" value="Chromosome I"/>
</dbReference>
<dbReference type="GO" id="GO:0005737">
    <property type="term" value="C:cytoplasm"/>
    <property type="evidence" value="ECO:0007669"/>
    <property type="project" value="UniProtKB-SubCell"/>
</dbReference>
<dbReference type="GO" id="GO:0005524">
    <property type="term" value="F:ATP binding"/>
    <property type="evidence" value="ECO:0007669"/>
    <property type="project" value="UniProtKB-UniRule"/>
</dbReference>
<dbReference type="GO" id="GO:0004828">
    <property type="term" value="F:serine-tRNA ligase activity"/>
    <property type="evidence" value="ECO:0007669"/>
    <property type="project" value="UniProtKB-UniRule"/>
</dbReference>
<dbReference type="GO" id="GO:0016260">
    <property type="term" value="P:selenocysteine biosynthetic process"/>
    <property type="evidence" value="ECO:0007669"/>
    <property type="project" value="UniProtKB-UniRule"/>
</dbReference>
<dbReference type="GO" id="GO:0006434">
    <property type="term" value="P:seryl-tRNA aminoacylation"/>
    <property type="evidence" value="ECO:0007669"/>
    <property type="project" value="UniProtKB-UniRule"/>
</dbReference>
<dbReference type="Gene3D" id="3.30.930.10">
    <property type="entry name" value="Bira Bifunctional Protein, Domain 2"/>
    <property type="match status" value="1"/>
</dbReference>
<dbReference type="Gene3D" id="1.10.287.40">
    <property type="entry name" value="Serine-tRNA synthetase, tRNA binding domain"/>
    <property type="match status" value="1"/>
</dbReference>
<dbReference type="HAMAP" id="MF_00176">
    <property type="entry name" value="Ser_tRNA_synth_type1"/>
    <property type="match status" value="1"/>
</dbReference>
<dbReference type="InterPro" id="IPR002314">
    <property type="entry name" value="aa-tRNA-synt_IIb"/>
</dbReference>
<dbReference type="InterPro" id="IPR006195">
    <property type="entry name" value="aa-tRNA-synth_II"/>
</dbReference>
<dbReference type="InterPro" id="IPR045864">
    <property type="entry name" value="aa-tRNA-synth_II/BPL/LPL"/>
</dbReference>
<dbReference type="InterPro" id="IPR002317">
    <property type="entry name" value="Ser-tRNA-ligase_type_1"/>
</dbReference>
<dbReference type="InterPro" id="IPR015866">
    <property type="entry name" value="Ser-tRNA-synth_1_N"/>
</dbReference>
<dbReference type="InterPro" id="IPR042103">
    <property type="entry name" value="SerRS_1_N_sf"/>
</dbReference>
<dbReference type="InterPro" id="IPR010978">
    <property type="entry name" value="tRNA-bd_arm"/>
</dbReference>
<dbReference type="NCBIfam" id="TIGR00414">
    <property type="entry name" value="serS"/>
    <property type="match status" value="1"/>
</dbReference>
<dbReference type="PANTHER" id="PTHR43697:SF1">
    <property type="entry name" value="SERINE--TRNA LIGASE"/>
    <property type="match status" value="1"/>
</dbReference>
<dbReference type="PANTHER" id="PTHR43697">
    <property type="entry name" value="SERYL-TRNA SYNTHETASE"/>
    <property type="match status" value="1"/>
</dbReference>
<dbReference type="Pfam" id="PF02403">
    <property type="entry name" value="Seryl_tRNA_N"/>
    <property type="match status" value="1"/>
</dbReference>
<dbReference type="Pfam" id="PF00587">
    <property type="entry name" value="tRNA-synt_2b"/>
    <property type="match status" value="1"/>
</dbReference>
<dbReference type="PIRSF" id="PIRSF001529">
    <property type="entry name" value="Ser-tRNA-synth_IIa"/>
    <property type="match status" value="1"/>
</dbReference>
<dbReference type="PRINTS" id="PR00981">
    <property type="entry name" value="TRNASYNTHSER"/>
</dbReference>
<dbReference type="SUPFAM" id="SSF55681">
    <property type="entry name" value="Class II aaRS and biotin synthetases"/>
    <property type="match status" value="1"/>
</dbReference>
<dbReference type="SUPFAM" id="SSF46589">
    <property type="entry name" value="tRNA-binding arm"/>
    <property type="match status" value="1"/>
</dbReference>
<dbReference type="PROSITE" id="PS50862">
    <property type="entry name" value="AA_TRNA_LIGASE_II"/>
    <property type="match status" value="1"/>
</dbReference>
<keyword id="KW-0030">Aminoacyl-tRNA synthetase</keyword>
<keyword id="KW-0067">ATP-binding</keyword>
<keyword id="KW-0963">Cytoplasm</keyword>
<keyword id="KW-0903">Direct protein sequencing</keyword>
<keyword id="KW-0436">Ligase</keyword>
<keyword id="KW-0547">Nucleotide-binding</keyword>
<keyword id="KW-0648">Protein biosynthesis</keyword>
<keyword id="KW-1185">Reference proteome</keyword>
<organism>
    <name type="scientific">Haloarcula marismortui (strain ATCC 43049 / DSM 3752 / JCM 8966 / VKM B-1809)</name>
    <name type="common">Halobacterium marismortui</name>
    <dbReference type="NCBI Taxonomy" id="272569"/>
    <lineage>
        <taxon>Archaea</taxon>
        <taxon>Methanobacteriati</taxon>
        <taxon>Methanobacteriota</taxon>
        <taxon>Stenosarchaea group</taxon>
        <taxon>Halobacteria</taxon>
        <taxon>Halobacteriales</taxon>
        <taxon>Haloarculaceae</taxon>
        <taxon>Haloarcula</taxon>
    </lineage>
</organism>